<feature type="chain" id="PRO_0000085464" description="Protein Vpr">
    <location>
        <begin position="1"/>
        <end position="104"/>
    </location>
</feature>
<feature type="region of interest" description="Disordered" evidence="2">
    <location>
        <begin position="1"/>
        <end position="21"/>
    </location>
</feature>
<feature type="region of interest" description="Disordered" evidence="2">
    <location>
        <begin position="84"/>
        <end position="104"/>
    </location>
</feature>
<feature type="compositionally biased region" description="Basic and acidic residues" evidence="2">
    <location>
        <begin position="10"/>
        <end position="20"/>
    </location>
</feature>
<feature type="modified residue" description="Phosphoserine; by host" evidence="1">
    <location>
        <position position="83"/>
    </location>
</feature>
<comment type="function">
    <text evidence="1">Stimulates gene expression driven by the HIV-2 LTR. Prevents infected cells from undergoing mitosis and proliferating, by inducing arrest or delay in the G2 phase of the cell cycle. Cell cycle arrest creates a favorable environment for maximizing viral expression and production (By similarity).</text>
</comment>
<comment type="subunit">
    <text evidence="1">Interacts with human UNG.</text>
</comment>
<comment type="subcellular location">
    <subcellularLocation>
        <location>Virion</location>
    </subcellularLocation>
    <subcellularLocation>
        <location evidence="1">Host nucleus</location>
    </subcellularLocation>
</comment>
<proteinExistence type="inferred from homology"/>
<sequence>MTEAPTESPPEDRTPPREPGDEWVIETLREIKEALKHFDPRLLITLGNYIYARHGDTLEGARGLIRILQRALLLHFRAGCGRSRIGQPRGRNPLSAIPTPRGMR</sequence>
<gene>
    <name type="primary">vpr</name>
</gene>
<dbReference type="EMBL" id="M31113">
    <property type="protein sequence ID" value="AAB01355.1"/>
    <property type="molecule type" value="Genomic_DNA"/>
</dbReference>
<dbReference type="PIR" id="E33943">
    <property type="entry name" value="ASLJSY"/>
</dbReference>
<dbReference type="SMR" id="P20884"/>
<dbReference type="Proteomes" id="UP000007713">
    <property type="component" value="Segment"/>
</dbReference>
<dbReference type="GO" id="GO:0043657">
    <property type="term" value="C:host cell"/>
    <property type="evidence" value="ECO:0007669"/>
    <property type="project" value="GOC"/>
</dbReference>
<dbReference type="GO" id="GO:0042025">
    <property type="term" value="C:host cell nucleus"/>
    <property type="evidence" value="ECO:0007669"/>
    <property type="project" value="UniProtKB-SubCell"/>
</dbReference>
<dbReference type="GO" id="GO:0044423">
    <property type="term" value="C:virion component"/>
    <property type="evidence" value="ECO:0007669"/>
    <property type="project" value="UniProtKB-KW"/>
</dbReference>
<dbReference type="GO" id="GO:0046718">
    <property type="term" value="P:symbiont entry into host cell"/>
    <property type="evidence" value="ECO:0007669"/>
    <property type="project" value="UniProtKB-KW"/>
</dbReference>
<dbReference type="GO" id="GO:0039592">
    <property type="term" value="P:symbiont-mediated arrest of host cell cycle during G2/M transition"/>
    <property type="evidence" value="ECO:0007669"/>
    <property type="project" value="UniProtKB-KW"/>
</dbReference>
<dbReference type="GO" id="GO:0075732">
    <property type="term" value="P:viral penetration into host nucleus"/>
    <property type="evidence" value="ECO:0007669"/>
    <property type="project" value="UniProtKB-KW"/>
</dbReference>
<dbReference type="Gene3D" id="6.10.210.10">
    <property type="match status" value="1"/>
</dbReference>
<dbReference type="Gene3D" id="1.20.5.90">
    <property type="entry name" value="VpR/VpX protein, C-terminal domain"/>
    <property type="match status" value="1"/>
</dbReference>
<dbReference type="InterPro" id="IPR000012">
    <property type="entry name" value="RetroV_VpR/X"/>
</dbReference>
<dbReference type="Pfam" id="PF00522">
    <property type="entry name" value="VPR"/>
    <property type="match status" value="1"/>
</dbReference>
<dbReference type="PRINTS" id="PR00444">
    <property type="entry name" value="HIVVPRVPX"/>
</dbReference>
<accession>P20884</accession>
<keyword id="KW-0010">Activator</keyword>
<keyword id="KW-0014">AIDS</keyword>
<keyword id="KW-0131">Cell cycle</keyword>
<keyword id="KW-1079">Host G2/M cell cycle arrest by virus</keyword>
<keyword id="KW-1048">Host nucleus</keyword>
<keyword id="KW-0945">Host-virus interaction</keyword>
<keyword id="KW-1121">Modulation of host cell cycle by virus</keyword>
<keyword id="KW-0597">Phosphoprotein</keyword>
<keyword id="KW-0804">Transcription</keyword>
<keyword id="KW-0805">Transcription regulation</keyword>
<keyword id="KW-1163">Viral penetration into host nucleus</keyword>
<keyword id="KW-0946">Virion</keyword>
<keyword id="KW-1160">Virus entry into host cell</keyword>
<organism>
    <name type="scientific">Human immunodeficiency virus type 2 subtype A (isolate ST)</name>
    <name type="common">HIV-2</name>
    <dbReference type="NCBI Taxonomy" id="11721"/>
    <lineage>
        <taxon>Viruses</taxon>
        <taxon>Riboviria</taxon>
        <taxon>Pararnavirae</taxon>
        <taxon>Artverviricota</taxon>
        <taxon>Revtraviricetes</taxon>
        <taxon>Ortervirales</taxon>
        <taxon>Retroviridae</taxon>
        <taxon>Orthoretrovirinae</taxon>
        <taxon>Lentivirus</taxon>
        <taxon>Human immunodeficiency virus 2</taxon>
    </lineage>
</organism>
<reference key="1">
    <citation type="journal article" date="1990" name="J. Virol.">
        <title>Molecular characterization of an attenuated human immunodeficiency virus type 2 isolate.</title>
        <authorList>
            <person name="Kumar P."/>
            <person name="Hui H."/>
            <person name="Kappes J.C."/>
            <person name="Haggarty B.S."/>
            <person name="Hoxie J.A."/>
            <person name="Arya S.K."/>
            <person name="Shaw G.M."/>
            <person name="Hahn B.H."/>
        </authorList>
    </citation>
    <scope>NUCLEOTIDE SEQUENCE [GENOMIC DNA]</scope>
</reference>
<evidence type="ECO:0000250" key="1"/>
<evidence type="ECO:0000256" key="2">
    <source>
        <dbReference type="SAM" id="MobiDB-lite"/>
    </source>
</evidence>
<protein>
    <recommendedName>
        <fullName>Protein Vpr</fullName>
    </recommendedName>
    <alternativeName>
        <fullName>R ORF protein</fullName>
    </alternativeName>
    <alternativeName>
        <fullName>Viral protein R</fullName>
    </alternativeName>
</protein>
<name>VPR_HV2ST</name>
<organismHost>
    <name type="scientific">Homo sapiens</name>
    <name type="common">Human</name>
    <dbReference type="NCBI Taxonomy" id="9606"/>
</organismHost>